<dbReference type="EMBL" id="AC009465">
    <property type="status" value="NOT_ANNOTATED_CDS"/>
    <property type="molecule type" value="Genomic_DNA"/>
</dbReference>
<dbReference type="EMBL" id="CP002686">
    <property type="protein sequence ID" value="AEE74162.1"/>
    <property type="molecule type" value="Genomic_DNA"/>
</dbReference>
<dbReference type="RefSeq" id="NP_001030638.1">
    <property type="nucleotide sequence ID" value="NM_001035561.1"/>
</dbReference>
<dbReference type="PaxDb" id="3702-AT3G04943.1"/>
<dbReference type="ProteomicsDB" id="224273"/>
<dbReference type="EnsemblPlants" id="AT3G04943.1">
    <property type="protein sequence ID" value="AT3G04943.1"/>
    <property type="gene ID" value="AT3G04943"/>
</dbReference>
<dbReference type="GeneID" id="3768828"/>
<dbReference type="Gramene" id="AT3G04943.1">
    <property type="protein sequence ID" value="AT3G04943.1"/>
    <property type="gene ID" value="AT3G04943"/>
</dbReference>
<dbReference type="KEGG" id="ath:AT3G04943"/>
<dbReference type="Araport" id="AT3G04943"/>
<dbReference type="TAIR" id="AT3G04943">
    <property type="gene designation" value="LCR41"/>
</dbReference>
<dbReference type="HOGENOM" id="CLU_199292_0_0_1"/>
<dbReference type="InParanoid" id="P82756"/>
<dbReference type="OMA" id="NSWICEG"/>
<dbReference type="OrthoDB" id="1021257at2759"/>
<dbReference type="PhylomeDB" id="P82756"/>
<dbReference type="PRO" id="PR:P82756"/>
<dbReference type="Proteomes" id="UP000006548">
    <property type="component" value="Chromosome 3"/>
</dbReference>
<dbReference type="ExpressionAtlas" id="P82756">
    <property type="expression patterns" value="baseline and differential"/>
</dbReference>
<dbReference type="GO" id="GO:0005576">
    <property type="term" value="C:extracellular region"/>
    <property type="evidence" value="ECO:0007669"/>
    <property type="project" value="UniProtKB-SubCell"/>
</dbReference>
<dbReference type="GO" id="GO:0050832">
    <property type="term" value="P:defense response to fungus"/>
    <property type="evidence" value="ECO:0007669"/>
    <property type="project" value="UniProtKB-KW"/>
</dbReference>
<dbReference type="GO" id="GO:0031640">
    <property type="term" value="P:killing of cells of another organism"/>
    <property type="evidence" value="ECO:0007669"/>
    <property type="project" value="UniProtKB-KW"/>
</dbReference>
<dbReference type="InterPro" id="IPR010851">
    <property type="entry name" value="DEFL"/>
</dbReference>
<dbReference type="PANTHER" id="PTHR33830">
    <property type="entry name" value="DEFENSIN-LIKE PROTEIN 184-RELATED"/>
    <property type="match status" value="1"/>
</dbReference>
<dbReference type="PANTHER" id="PTHR33830:SF30">
    <property type="entry name" value="DEFENSIN-LIKE PROTEIN 184-RELATED"/>
    <property type="match status" value="1"/>
</dbReference>
<dbReference type="Pfam" id="PF25052">
    <property type="entry name" value="AtDEF-like"/>
    <property type="match status" value="1"/>
</dbReference>
<keyword id="KW-0929">Antimicrobial</keyword>
<keyword id="KW-1015">Disulfide bond</keyword>
<keyword id="KW-0295">Fungicide</keyword>
<keyword id="KW-0611">Plant defense</keyword>
<keyword id="KW-1185">Reference proteome</keyword>
<keyword id="KW-0964">Secreted</keyword>
<keyword id="KW-0732">Signal</keyword>
<proteinExistence type="inferred from homology"/>
<gene>
    <name type="primary">LCR41</name>
    <name type="ordered locus">At3g04943</name>
    <name type="ORF">T9J14</name>
</gene>
<protein>
    <recommendedName>
        <fullName>Putative defensin-like protein 188</fullName>
    </recommendedName>
    <alternativeName>
        <fullName>Putative low-molecular-weight cysteine-rich protein 41</fullName>
        <shortName>Protein LCR41</shortName>
    </alternativeName>
</protein>
<name>DF188_ARATH</name>
<sequence length="81" mass="9137">MKNSSLLFILIVVFVISSSENGIMIGEAKKCSNSWICEGDEKCKEKCMADYKGNGTCYYPSPPSKQHPEFFYPTCWCGFDC</sequence>
<organism evidence="3">
    <name type="scientific">Arabidopsis thaliana</name>
    <name type="common">Mouse-ear cress</name>
    <dbReference type="NCBI Taxonomy" id="3702"/>
    <lineage>
        <taxon>Eukaryota</taxon>
        <taxon>Viridiplantae</taxon>
        <taxon>Streptophyta</taxon>
        <taxon>Embryophyta</taxon>
        <taxon>Tracheophyta</taxon>
        <taxon>Spermatophyta</taxon>
        <taxon>Magnoliopsida</taxon>
        <taxon>eudicotyledons</taxon>
        <taxon>Gunneridae</taxon>
        <taxon>Pentapetalae</taxon>
        <taxon>rosids</taxon>
        <taxon>malvids</taxon>
        <taxon>Brassicales</taxon>
        <taxon>Brassicaceae</taxon>
        <taxon>Camelineae</taxon>
        <taxon>Arabidopsis</taxon>
    </lineage>
</organism>
<accession>P82756</accession>
<feature type="signal peptide" evidence="2">
    <location>
        <begin position="1"/>
        <end position="19"/>
    </location>
</feature>
<feature type="chain" id="PRO_0000017280" description="Putative defensin-like protein 188">
    <location>
        <begin position="20"/>
        <end position="81"/>
    </location>
</feature>
<feature type="disulfide bond" evidence="1">
    <location>
        <begin position="31"/>
        <end position="81"/>
    </location>
</feature>
<feature type="disulfide bond" evidence="1">
    <location>
        <begin position="37"/>
        <end position="57"/>
    </location>
</feature>
<feature type="disulfide bond" evidence="1">
    <location>
        <begin position="43"/>
        <end position="75"/>
    </location>
</feature>
<feature type="disulfide bond" evidence="1">
    <location>
        <begin position="47"/>
        <end position="77"/>
    </location>
</feature>
<comment type="subcellular location">
    <subcellularLocation>
        <location evidence="1">Secreted</location>
    </subcellularLocation>
</comment>
<comment type="similarity">
    <text evidence="3">Belongs to the DEFL family.</text>
</comment>
<reference evidence="3" key="1">
    <citation type="journal article" date="2000" name="Nature">
        <title>Sequence and analysis of chromosome 3 of the plant Arabidopsis thaliana.</title>
        <authorList>
            <person name="Salanoubat M."/>
            <person name="Lemcke K."/>
            <person name="Rieger M."/>
            <person name="Ansorge W."/>
            <person name="Unseld M."/>
            <person name="Fartmann B."/>
            <person name="Valle G."/>
            <person name="Bloecker H."/>
            <person name="Perez-Alonso M."/>
            <person name="Obermaier B."/>
            <person name="Delseny M."/>
            <person name="Boutry M."/>
            <person name="Grivell L.A."/>
            <person name="Mache R."/>
            <person name="Puigdomenech P."/>
            <person name="De Simone V."/>
            <person name="Choisne N."/>
            <person name="Artiguenave F."/>
            <person name="Robert C."/>
            <person name="Brottier P."/>
            <person name="Wincker P."/>
            <person name="Cattolico L."/>
            <person name="Weissenbach J."/>
            <person name="Saurin W."/>
            <person name="Quetier F."/>
            <person name="Schaefer M."/>
            <person name="Mueller-Auer S."/>
            <person name="Gabel C."/>
            <person name="Fuchs M."/>
            <person name="Benes V."/>
            <person name="Wurmbach E."/>
            <person name="Drzonek H."/>
            <person name="Erfle H."/>
            <person name="Jordan N."/>
            <person name="Bangert S."/>
            <person name="Wiedelmann R."/>
            <person name="Kranz H."/>
            <person name="Voss H."/>
            <person name="Holland R."/>
            <person name="Brandt P."/>
            <person name="Nyakatura G."/>
            <person name="Vezzi A."/>
            <person name="D'Angelo M."/>
            <person name="Pallavicini A."/>
            <person name="Toppo S."/>
            <person name="Simionati B."/>
            <person name="Conrad A."/>
            <person name="Hornischer K."/>
            <person name="Kauer G."/>
            <person name="Loehnert T.-H."/>
            <person name="Nordsiek G."/>
            <person name="Reichelt J."/>
            <person name="Scharfe M."/>
            <person name="Schoen O."/>
            <person name="Bargues M."/>
            <person name="Terol J."/>
            <person name="Climent J."/>
            <person name="Navarro P."/>
            <person name="Collado C."/>
            <person name="Perez-Perez A."/>
            <person name="Ottenwaelder B."/>
            <person name="Duchemin D."/>
            <person name="Cooke R."/>
            <person name="Laudie M."/>
            <person name="Berger-Llauro C."/>
            <person name="Purnelle B."/>
            <person name="Masuy D."/>
            <person name="de Haan M."/>
            <person name="Maarse A.C."/>
            <person name="Alcaraz J.-P."/>
            <person name="Cottet A."/>
            <person name="Casacuberta E."/>
            <person name="Monfort A."/>
            <person name="Argiriou A."/>
            <person name="Flores M."/>
            <person name="Liguori R."/>
            <person name="Vitale D."/>
            <person name="Mannhaupt G."/>
            <person name="Haase D."/>
            <person name="Schoof H."/>
            <person name="Rudd S."/>
            <person name="Zaccaria P."/>
            <person name="Mewes H.-W."/>
            <person name="Mayer K.F.X."/>
            <person name="Kaul S."/>
            <person name="Town C.D."/>
            <person name="Koo H.L."/>
            <person name="Tallon L.J."/>
            <person name="Jenkins J."/>
            <person name="Rooney T."/>
            <person name="Rizzo M."/>
            <person name="Walts A."/>
            <person name="Utterback T."/>
            <person name="Fujii C.Y."/>
            <person name="Shea T.P."/>
            <person name="Creasy T.H."/>
            <person name="Haas B."/>
            <person name="Maiti R."/>
            <person name="Wu D."/>
            <person name="Peterson J."/>
            <person name="Van Aken S."/>
            <person name="Pai G."/>
            <person name="Militscher J."/>
            <person name="Sellers P."/>
            <person name="Gill J.E."/>
            <person name="Feldblyum T.V."/>
            <person name="Preuss D."/>
            <person name="Lin X."/>
            <person name="Nierman W.C."/>
            <person name="Salzberg S.L."/>
            <person name="White O."/>
            <person name="Venter J.C."/>
            <person name="Fraser C.M."/>
            <person name="Kaneko T."/>
            <person name="Nakamura Y."/>
            <person name="Sato S."/>
            <person name="Kato T."/>
            <person name="Asamizu E."/>
            <person name="Sasamoto S."/>
            <person name="Kimura T."/>
            <person name="Idesawa K."/>
            <person name="Kawashima K."/>
            <person name="Kishida Y."/>
            <person name="Kiyokawa C."/>
            <person name="Kohara M."/>
            <person name="Matsumoto M."/>
            <person name="Matsuno A."/>
            <person name="Muraki A."/>
            <person name="Nakayama S."/>
            <person name="Nakazaki N."/>
            <person name="Shinpo S."/>
            <person name="Takeuchi C."/>
            <person name="Wada T."/>
            <person name="Watanabe A."/>
            <person name="Yamada M."/>
            <person name="Yasuda M."/>
            <person name="Tabata S."/>
        </authorList>
    </citation>
    <scope>NUCLEOTIDE SEQUENCE [LARGE SCALE GENOMIC DNA]</scope>
    <source>
        <strain>cv. Columbia</strain>
    </source>
</reference>
<reference key="2">
    <citation type="journal article" date="2017" name="Plant J.">
        <title>Araport11: a complete reannotation of the Arabidopsis thaliana reference genome.</title>
        <authorList>
            <person name="Cheng C.Y."/>
            <person name="Krishnakumar V."/>
            <person name="Chan A.P."/>
            <person name="Thibaud-Nissen F."/>
            <person name="Schobel S."/>
            <person name="Town C.D."/>
        </authorList>
    </citation>
    <scope>GENOME REANNOTATION</scope>
    <source>
        <strain>cv. Columbia</strain>
    </source>
</reference>
<reference evidence="3" key="3">
    <citation type="journal article" date="2001" name="Plant Mol. Biol.">
        <title>Two large Arabidopsis thaliana gene families are homologous to the Brassica gene superfamily that encodes pollen coat proteins and the male component of the self-incompatibility response.</title>
        <authorList>
            <person name="Vanoosthuyse V."/>
            <person name="Miege C."/>
            <person name="Dumas C."/>
            <person name="Cock J.M."/>
        </authorList>
    </citation>
    <scope>IDENTIFICATION</scope>
</reference>
<reference key="4">
    <citation type="journal article" date="2005" name="Plant Physiol.">
        <title>Genome organization of more than 300 defensin-like genes in Arabidopsis.</title>
        <authorList>
            <person name="Silverstein K.A.T."/>
            <person name="Graham M.A."/>
            <person name="Paape T.D."/>
            <person name="VandenBosch K.A."/>
        </authorList>
    </citation>
    <scope>GENE FAMILY</scope>
</reference>
<evidence type="ECO:0000250" key="1"/>
<evidence type="ECO:0000255" key="2"/>
<evidence type="ECO:0000305" key="3"/>